<evidence type="ECO:0000255" key="1">
    <source>
        <dbReference type="HAMAP-Rule" id="MF_01866"/>
    </source>
</evidence>
<proteinExistence type="inferred from homology"/>
<sequence length="86" mass="9723">MHAYVYKSQRKQDTFVYLATRDDFSGLPAEVQAQLAPFSFVLEVALTPERRLAQADVATVREALGKHGFYLQLPKTRVLAGECDYD</sequence>
<name>Y428_XANOM</name>
<reference key="1">
    <citation type="journal article" date="2005" name="Jpn. Agric. Res. Q.">
        <title>Genome sequence of Xanthomonas oryzae pv. oryzae suggests contribution of large numbers of effector genes and insertion sequences to its race diversity.</title>
        <authorList>
            <person name="Ochiai H."/>
            <person name="Inoue Y."/>
            <person name="Takeya M."/>
            <person name="Sasaki A."/>
            <person name="Kaku H."/>
        </authorList>
    </citation>
    <scope>NUCLEOTIDE SEQUENCE [LARGE SCALE GENOMIC DNA]</scope>
    <source>
        <strain>MAFF 311018</strain>
    </source>
</reference>
<protein>
    <recommendedName>
        <fullName evidence="1">YcgL domain-containing protein XOO0428</fullName>
    </recommendedName>
</protein>
<gene>
    <name type="ordered locus">XOO0428</name>
</gene>
<dbReference type="EMBL" id="AP008229">
    <property type="protein sequence ID" value="BAE67183.1"/>
    <property type="molecule type" value="Genomic_DNA"/>
</dbReference>
<dbReference type="RefSeq" id="WP_011407425.1">
    <property type="nucleotide sequence ID" value="NC_007705.1"/>
</dbReference>
<dbReference type="SMR" id="Q2P8E4"/>
<dbReference type="KEGG" id="xom:XOO0428"/>
<dbReference type="HOGENOM" id="CLU_155118_0_0_6"/>
<dbReference type="Gene3D" id="3.10.510.20">
    <property type="entry name" value="YcgL domain"/>
    <property type="match status" value="1"/>
</dbReference>
<dbReference type="HAMAP" id="MF_01866">
    <property type="entry name" value="UPF0745"/>
    <property type="match status" value="1"/>
</dbReference>
<dbReference type="InterPro" id="IPR038068">
    <property type="entry name" value="YcgL-like_sf"/>
</dbReference>
<dbReference type="InterPro" id="IPR027354">
    <property type="entry name" value="YcgL_dom"/>
</dbReference>
<dbReference type="PANTHER" id="PTHR38109">
    <property type="entry name" value="PROTEIN YCGL"/>
    <property type="match status" value="1"/>
</dbReference>
<dbReference type="PANTHER" id="PTHR38109:SF1">
    <property type="entry name" value="PROTEIN YCGL"/>
    <property type="match status" value="1"/>
</dbReference>
<dbReference type="Pfam" id="PF05166">
    <property type="entry name" value="YcgL"/>
    <property type="match status" value="1"/>
</dbReference>
<dbReference type="SUPFAM" id="SSF160191">
    <property type="entry name" value="YcgL-like"/>
    <property type="match status" value="1"/>
</dbReference>
<dbReference type="PROSITE" id="PS51648">
    <property type="entry name" value="YCGL"/>
    <property type="match status" value="1"/>
</dbReference>
<feature type="chain" id="PRO_0000375408" description="YcgL domain-containing protein XOO0428">
    <location>
        <begin position="1"/>
        <end position="86"/>
    </location>
</feature>
<feature type="domain" description="YcgL" evidence="1">
    <location>
        <begin position="1"/>
        <end position="83"/>
    </location>
</feature>
<accession>Q2P8E4</accession>
<organism>
    <name type="scientific">Xanthomonas oryzae pv. oryzae (strain MAFF 311018)</name>
    <dbReference type="NCBI Taxonomy" id="342109"/>
    <lineage>
        <taxon>Bacteria</taxon>
        <taxon>Pseudomonadati</taxon>
        <taxon>Pseudomonadota</taxon>
        <taxon>Gammaproteobacteria</taxon>
        <taxon>Lysobacterales</taxon>
        <taxon>Lysobacteraceae</taxon>
        <taxon>Xanthomonas</taxon>
    </lineage>
</organism>